<protein>
    <recommendedName>
        <fullName evidence="1">Beta-ketoacyl-[acyl-carrier-protein] synthase III</fullName>
        <shortName evidence="1">Beta-ketoacyl-ACP synthase III</shortName>
        <shortName evidence="1">KAS III</shortName>
        <ecNumber evidence="1">2.3.1.180</ecNumber>
    </recommendedName>
    <alternativeName>
        <fullName evidence="1">3-oxoacyl-[acyl-carrier-protein] synthase 3</fullName>
    </alternativeName>
    <alternativeName>
        <fullName evidence="1">3-oxoacyl-[acyl-carrier-protein] synthase III</fullName>
    </alternativeName>
</protein>
<organism>
    <name type="scientific">Synechococcus sp. (strain WH7803)</name>
    <dbReference type="NCBI Taxonomy" id="32051"/>
    <lineage>
        <taxon>Bacteria</taxon>
        <taxon>Bacillati</taxon>
        <taxon>Cyanobacteriota</taxon>
        <taxon>Cyanophyceae</taxon>
        <taxon>Synechococcales</taxon>
        <taxon>Synechococcaceae</taxon>
        <taxon>Synechococcus</taxon>
    </lineage>
</organism>
<comment type="function">
    <text evidence="1">Catalyzes the condensation reaction of fatty acid synthesis by the addition to an acyl acceptor of two carbons from malonyl-ACP. Catalyzes the first condensation reaction which initiates fatty acid synthesis and may therefore play a role in governing the total rate of fatty acid production. Possesses both acetoacetyl-ACP synthase and acetyl transacylase activities. Its substrate specificity determines the biosynthesis of branched-chain and/or straight-chain of fatty acids.</text>
</comment>
<comment type="catalytic activity">
    <reaction evidence="1">
        <text>malonyl-[ACP] + acetyl-CoA + H(+) = 3-oxobutanoyl-[ACP] + CO2 + CoA</text>
        <dbReference type="Rhea" id="RHEA:12080"/>
        <dbReference type="Rhea" id="RHEA-COMP:9623"/>
        <dbReference type="Rhea" id="RHEA-COMP:9625"/>
        <dbReference type="ChEBI" id="CHEBI:15378"/>
        <dbReference type="ChEBI" id="CHEBI:16526"/>
        <dbReference type="ChEBI" id="CHEBI:57287"/>
        <dbReference type="ChEBI" id="CHEBI:57288"/>
        <dbReference type="ChEBI" id="CHEBI:78449"/>
        <dbReference type="ChEBI" id="CHEBI:78450"/>
        <dbReference type="EC" id="2.3.1.180"/>
    </reaction>
</comment>
<comment type="pathway">
    <text evidence="1">Lipid metabolism; fatty acid biosynthesis.</text>
</comment>
<comment type="subunit">
    <text evidence="1">Homodimer.</text>
</comment>
<comment type="subcellular location">
    <subcellularLocation>
        <location evidence="1">Cytoplasm</location>
    </subcellularLocation>
</comment>
<comment type="domain">
    <text evidence="1">The last Arg residue of the ACP-binding site is essential for the weak association between ACP/AcpP and FabH.</text>
</comment>
<comment type="similarity">
    <text evidence="1">Belongs to the thiolase-like superfamily. FabH family.</text>
</comment>
<accession>A5GP11</accession>
<proteinExistence type="inferred from homology"/>
<dbReference type="EC" id="2.3.1.180" evidence="1"/>
<dbReference type="EMBL" id="CT971583">
    <property type="protein sequence ID" value="CAK24676.1"/>
    <property type="molecule type" value="Genomic_DNA"/>
</dbReference>
<dbReference type="SMR" id="A5GP11"/>
<dbReference type="STRING" id="32051.SynWH7803_2250"/>
<dbReference type="KEGG" id="syx:SynWH7803_2250"/>
<dbReference type="eggNOG" id="COG0332">
    <property type="taxonomic scope" value="Bacteria"/>
</dbReference>
<dbReference type="HOGENOM" id="CLU_039592_0_1_3"/>
<dbReference type="OrthoDB" id="9815506at2"/>
<dbReference type="UniPathway" id="UPA00094"/>
<dbReference type="Proteomes" id="UP000001566">
    <property type="component" value="Chromosome"/>
</dbReference>
<dbReference type="GO" id="GO:0005737">
    <property type="term" value="C:cytoplasm"/>
    <property type="evidence" value="ECO:0007669"/>
    <property type="project" value="UniProtKB-SubCell"/>
</dbReference>
<dbReference type="GO" id="GO:0004315">
    <property type="term" value="F:3-oxoacyl-[acyl-carrier-protein] synthase activity"/>
    <property type="evidence" value="ECO:0007669"/>
    <property type="project" value="InterPro"/>
</dbReference>
<dbReference type="GO" id="GO:0033818">
    <property type="term" value="F:beta-ketoacyl-acyl-carrier-protein synthase III activity"/>
    <property type="evidence" value="ECO:0007669"/>
    <property type="project" value="UniProtKB-UniRule"/>
</dbReference>
<dbReference type="GO" id="GO:0006633">
    <property type="term" value="P:fatty acid biosynthetic process"/>
    <property type="evidence" value="ECO:0007669"/>
    <property type="project" value="UniProtKB-UniRule"/>
</dbReference>
<dbReference type="CDD" id="cd00830">
    <property type="entry name" value="KAS_III"/>
    <property type="match status" value="1"/>
</dbReference>
<dbReference type="FunFam" id="3.40.47.10:FF:000004">
    <property type="entry name" value="3-oxoacyl-[acyl-carrier-protein] synthase 3"/>
    <property type="match status" value="1"/>
</dbReference>
<dbReference type="Gene3D" id="3.40.47.10">
    <property type="match status" value="1"/>
</dbReference>
<dbReference type="HAMAP" id="MF_01815">
    <property type="entry name" value="FabH"/>
    <property type="match status" value="1"/>
</dbReference>
<dbReference type="InterPro" id="IPR013747">
    <property type="entry name" value="ACP_syn_III_C"/>
</dbReference>
<dbReference type="InterPro" id="IPR013751">
    <property type="entry name" value="ACP_syn_III_N"/>
</dbReference>
<dbReference type="InterPro" id="IPR004655">
    <property type="entry name" value="FabH"/>
</dbReference>
<dbReference type="InterPro" id="IPR016039">
    <property type="entry name" value="Thiolase-like"/>
</dbReference>
<dbReference type="NCBIfam" id="TIGR00747">
    <property type="entry name" value="fabH"/>
    <property type="match status" value="1"/>
</dbReference>
<dbReference type="NCBIfam" id="NF006829">
    <property type="entry name" value="PRK09352.1"/>
    <property type="match status" value="1"/>
</dbReference>
<dbReference type="PANTHER" id="PTHR43091">
    <property type="entry name" value="3-OXOACYL-[ACYL-CARRIER-PROTEIN] SYNTHASE"/>
    <property type="match status" value="1"/>
</dbReference>
<dbReference type="PANTHER" id="PTHR43091:SF1">
    <property type="entry name" value="BETA-KETOACYL-[ACYL-CARRIER-PROTEIN] SYNTHASE III, CHLOROPLASTIC"/>
    <property type="match status" value="1"/>
</dbReference>
<dbReference type="Pfam" id="PF08545">
    <property type="entry name" value="ACP_syn_III"/>
    <property type="match status" value="1"/>
</dbReference>
<dbReference type="Pfam" id="PF08541">
    <property type="entry name" value="ACP_syn_III_C"/>
    <property type="match status" value="1"/>
</dbReference>
<dbReference type="SUPFAM" id="SSF53901">
    <property type="entry name" value="Thiolase-like"/>
    <property type="match status" value="1"/>
</dbReference>
<gene>
    <name evidence="1" type="primary">fabH</name>
    <name type="ordered locus">SynWH7803_2250</name>
</gene>
<feature type="chain" id="PRO_1000056434" description="Beta-ketoacyl-[acyl-carrier-protein] synthase III">
    <location>
        <begin position="1"/>
        <end position="337"/>
    </location>
</feature>
<feature type="region of interest" description="ACP-binding" evidence="1">
    <location>
        <begin position="261"/>
        <end position="265"/>
    </location>
</feature>
<feature type="active site" evidence="1">
    <location>
        <position position="119"/>
    </location>
</feature>
<feature type="active site" evidence="1">
    <location>
        <position position="260"/>
    </location>
</feature>
<feature type="active site" evidence="1">
    <location>
        <position position="290"/>
    </location>
</feature>
<reference key="1">
    <citation type="submission" date="2006-05" db="EMBL/GenBank/DDBJ databases">
        <authorList>
            <consortium name="Genoscope"/>
        </authorList>
    </citation>
    <scope>NUCLEOTIDE SEQUENCE [LARGE SCALE GENOMIC DNA]</scope>
    <source>
        <strain>WH7803</strain>
    </source>
</reference>
<name>FABH_SYNPW</name>
<sequence length="337" mass="35281">MAGQSPPVLGVGLIGSGSAQAAQVISNDQLSQRVDTNDEWIRTRTGIGRRRVSTADQTLVDLAAEAGRSALTMAGRSPQDLDLILLATSTPDDLFGSAPRVQAELGATNAVAFDLTAACSGFLFALVTAAQYLRTGAMRRALVIGADQLSRFVDWDDRRSCVLFGDGAGAVVLEASDEDGLLGFLLHSDGARGAVLNLPANDTSAPLIAGAEHRAGGYRPIVMNGQEVYKFAVREVPAVLQSLLKRCDVSADQLDWLLLHQANQRILDAVADRLSVPGAKVLSNLAAYGNTSAATIPLMLDEAVRDGRVSSGDLLASSGFGAGLSWGAALLRWQGPT</sequence>
<keyword id="KW-0012">Acyltransferase</keyword>
<keyword id="KW-0963">Cytoplasm</keyword>
<keyword id="KW-0275">Fatty acid biosynthesis</keyword>
<keyword id="KW-0276">Fatty acid metabolism</keyword>
<keyword id="KW-0444">Lipid biosynthesis</keyword>
<keyword id="KW-0443">Lipid metabolism</keyword>
<keyword id="KW-0511">Multifunctional enzyme</keyword>
<keyword id="KW-1185">Reference proteome</keyword>
<keyword id="KW-0808">Transferase</keyword>
<evidence type="ECO:0000255" key="1">
    <source>
        <dbReference type="HAMAP-Rule" id="MF_01815"/>
    </source>
</evidence>